<keyword id="KW-0067">ATP-binding</keyword>
<keyword id="KW-0963">Cytoplasm</keyword>
<keyword id="KW-0227">DNA damage</keyword>
<keyword id="KW-0233">DNA recombination</keyword>
<keyword id="KW-0234">DNA repair</keyword>
<keyword id="KW-0238">DNA-binding</keyword>
<keyword id="KW-0547">Nucleotide-binding</keyword>
<keyword id="KW-1185">Reference proteome</keyword>
<keyword id="KW-0742">SOS response</keyword>
<sequence length="346" mass="36964">MAATPDKGKALELALAQIDKQYGKGSVMRLGDETRAPIEVIPTGSISLDVALGIGGLPRGRIVEVYGPESSGKTSVALHAVANAQKLGGTAAFIDAEHALDPEYAKAIGVDTDSLLVSQPDTGEQALEIADMLIRSGALDIIVIDSVAALVPRAEIEGEMGDSHVGLQARLMSQALRKLTSALYNAKTTAIFINQLREKVGVMFGSPETTTGGKALKFYSSVRLDVRRIETLKDGSDAVGNRTRVKVVKNKVAPPFKQAEFDIIYGIGISREGSLIDMGVEQGIIRKSGAWYTYEGDQLGQGKENARKFMRENPDVANEIEKRIKEKLGIGAQVDAETADPAPVDF</sequence>
<comment type="function">
    <text evidence="1">Can catalyze the hydrolysis of ATP in the presence of single-stranded DNA, the ATP-dependent uptake of single-stranded DNA by duplex DNA, and the ATP-dependent hybridization of homologous single-stranded DNAs. It interacts with LexA causing its activation and leading to its autocatalytic cleavage.</text>
</comment>
<comment type="subcellular location">
    <subcellularLocation>
        <location evidence="1">Cytoplasm</location>
    </subcellularLocation>
</comment>
<comment type="similarity">
    <text evidence="1">Belongs to the RecA family.</text>
</comment>
<feature type="chain" id="PRO_1000047989" description="Protein RecA">
    <location>
        <begin position="1"/>
        <end position="346"/>
    </location>
</feature>
<feature type="binding site" evidence="1">
    <location>
        <begin position="67"/>
        <end position="74"/>
    </location>
    <ligand>
        <name>ATP</name>
        <dbReference type="ChEBI" id="CHEBI:30616"/>
    </ligand>
</feature>
<accession>A4FAH9</accession>
<reference key="1">
    <citation type="journal article" date="2007" name="Nat. Biotechnol.">
        <title>Complete genome sequence of the erythromycin-producing bacterium Saccharopolyspora erythraea NRRL23338.</title>
        <authorList>
            <person name="Oliynyk M."/>
            <person name="Samborskyy M."/>
            <person name="Lester J.B."/>
            <person name="Mironenko T."/>
            <person name="Scott N."/>
            <person name="Dickens S."/>
            <person name="Haydock S.F."/>
            <person name="Leadlay P.F."/>
        </authorList>
    </citation>
    <scope>NUCLEOTIDE SEQUENCE [LARGE SCALE GENOMIC DNA]</scope>
    <source>
        <strain>ATCC 11635 / DSM 40517 / JCM 4748 / NBRC 13426 / NCIMB 8594 / NRRL 2338</strain>
    </source>
</reference>
<name>RECA_SACEN</name>
<proteinExistence type="inferred from homology"/>
<dbReference type="EMBL" id="AM420293">
    <property type="protein sequence ID" value="CAM01054.1"/>
    <property type="molecule type" value="Genomic_DNA"/>
</dbReference>
<dbReference type="RefSeq" id="WP_009943797.1">
    <property type="nucleotide sequence ID" value="NC_009142.1"/>
</dbReference>
<dbReference type="SMR" id="A4FAH9"/>
<dbReference type="STRING" id="405948.SACE_1736"/>
<dbReference type="KEGG" id="sen:SACE_1736"/>
<dbReference type="eggNOG" id="COG0468">
    <property type="taxonomic scope" value="Bacteria"/>
</dbReference>
<dbReference type="HOGENOM" id="CLU_040469_1_2_11"/>
<dbReference type="OrthoDB" id="9776733at2"/>
<dbReference type="Proteomes" id="UP000006728">
    <property type="component" value="Chromosome"/>
</dbReference>
<dbReference type="GO" id="GO:0005829">
    <property type="term" value="C:cytosol"/>
    <property type="evidence" value="ECO:0007669"/>
    <property type="project" value="TreeGrafter"/>
</dbReference>
<dbReference type="GO" id="GO:0005524">
    <property type="term" value="F:ATP binding"/>
    <property type="evidence" value="ECO:0007669"/>
    <property type="project" value="UniProtKB-UniRule"/>
</dbReference>
<dbReference type="GO" id="GO:0016887">
    <property type="term" value="F:ATP hydrolysis activity"/>
    <property type="evidence" value="ECO:0007669"/>
    <property type="project" value="InterPro"/>
</dbReference>
<dbReference type="GO" id="GO:0140664">
    <property type="term" value="F:ATP-dependent DNA damage sensor activity"/>
    <property type="evidence" value="ECO:0007669"/>
    <property type="project" value="InterPro"/>
</dbReference>
<dbReference type="GO" id="GO:0003684">
    <property type="term" value="F:damaged DNA binding"/>
    <property type="evidence" value="ECO:0007669"/>
    <property type="project" value="UniProtKB-UniRule"/>
</dbReference>
<dbReference type="GO" id="GO:0003697">
    <property type="term" value="F:single-stranded DNA binding"/>
    <property type="evidence" value="ECO:0007669"/>
    <property type="project" value="UniProtKB-UniRule"/>
</dbReference>
<dbReference type="GO" id="GO:0006310">
    <property type="term" value="P:DNA recombination"/>
    <property type="evidence" value="ECO:0007669"/>
    <property type="project" value="UniProtKB-UniRule"/>
</dbReference>
<dbReference type="GO" id="GO:0006281">
    <property type="term" value="P:DNA repair"/>
    <property type="evidence" value="ECO:0007669"/>
    <property type="project" value="UniProtKB-UniRule"/>
</dbReference>
<dbReference type="GO" id="GO:0009432">
    <property type="term" value="P:SOS response"/>
    <property type="evidence" value="ECO:0007669"/>
    <property type="project" value="UniProtKB-UniRule"/>
</dbReference>
<dbReference type="CDD" id="cd00983">
    <property type="entry name" value="RecA"/>
    <property type="match status" value="1"/>
</dbReference>
<dbReference type="FunFam" id="3.40.50.300:FF:000087">
    <property type="entry name" value="Recombinase RecA"/>
    <property type="match status" value="1"/>
</dbReference>
<dbReference type="Gene3D" id="3.40.50.300">
    <property type="entry name" value="P-loop containing nucleotide triphosphate hydrolases"/>
    <property type="match status" value="1"/>
</dbReference>
<dbReference type="HAMAP" id="MF_00268">
    <property type="entry name" value="RecA"/>
    <property type="match status" value="1"/>
</dbReference>
<dbReference type="InterPro" id="IPR003593">
    <property type="entry name" value="AAA+_ATPase"/>
</dbReference>
<dbReference type="InterPro" id="IPR013765">
    <property type="entry name" value="DNA_recomb/repair_RecA"/>
</dbReference>
<dbReference type="InterPro" id="IPR020584">
    <property type="entry name" value="DNA_recomb/repair_RecA_CS"/>
</dbReference>
<dbReference type="InterPro" id="IPR027417">
    <property type="entry name" value="P-loop_NTPase"/>
</dbReference>
<dbReference type="InterPro" id="IPR049261">
    <property type="entry name" value="RecA-like_C"/>
</dbReference>
<dbReference type="InterPro" id="IPR049428">
    <property type="entry name" value="RecA-like_N"/>
</dbReference>
<dbReference type="InterPro" id="IPR020588">
    <property type="entry name" value="RecA_ATP-bd"/>
</dbReference>
<dbReference type="InterPro" id="IPR023400">
    <property type="entry name" value="RecA_C_sf"/>
</dbReference>
<dbReference type="InterPro" id="IPR020587">
    <property type="entry name" value="RecA_monomer-monomer_interface"/>
</dbReference>
<dbReference type="NCBIfam" id="TIGR02012">
    <property type="entry name" value="tigrfam_recA"/>
    <property type="match status" value="1"/>
</dbReference>
<dbReference type="PANTHER" id="PTHR45900:SF1">
    <property type="entry name" value="MITOCHONDRIAL DNA REPAIR PROTEIN RECA HOMOLOG-RELATED"/>
    <property type="match status" value="1"/>
</dbReference>
<dbReference type="PANTHER" id="PTHR45900">
    <property type="entry name" value="RECA"/>
    <property type="match status" value="1"/>
</dbReference>
<dbReference type="Pfam" id="PF00154">
    <property type="entry name" value="RecA"/>
    <property type="match status" value="1"/>
</dbReference>
<dbReference type="Pfam" id="PF21096">
    <property type="entry name" value="RecA_C"/>
    <property type="match status" value="1"/>
</dbReference>
<dbReference type="PRINTS" id="PR00142">
    <property type="entry name" value="RECA"/>
</dbReference>
<dbReference type="SMART" id="SM00382">
    <property type="entry name" value="AAA"/>
    <property type="match status" value="1"/>
</dbReference>
<dbReference type="SUPFAM" id="SSF52540">
    <property type="entry name" value="P-loop containing nucleoside triphosphate hydrolases"/>
    <property type="match status" value="1"/>
</dbReference>
<dbReference type="SUPFAM" id="SSF54752">
    <property type="entry name" value="RecA protein, C-terminal domain"/>
    <property type="match status" value="1"/>
</dbReference>
<dbReference type="PROSITE" id="PS00321">
    <property type="entry name" value="RECA_1"/>
    <property type="match status" value="1"/>
</dbReference>
<dbReference type="PROSITE" id="PS50162">
    <property type="entry name" value="RECA_2"/>
    <property type="match status" value="1"/>
</dbReference>
<dbReference type="PROSITE" id="PS50163">
    <property type="entry name" value="RECA_3"/>
    <property type="match status" value="1"/>
</dbReference>
<organism>
    <name type="scientific">Saccharopolyspora erythraea (strain ATCC 11635 / DSM 40517 / JCM 4748 / NBRC 13426 / NCIMB 8594 / NRRL 2338)</name>
    <dbReference type="NCBI Taxonomy" id="405948"/>
    <lineage>
        <taxon>Bacteria</taxon>
        <taxon>Bacillati</taxon>
        <taxon>Actinomycetota</taxon>
        <taxon>Actinomycetes</taxon>
        <taxon>Pseudonocardiales</taxon>
        <taxon>Pseudonocardiaceae</taxon>
        <taxon>Saccharopolyspora</taxon>
    </lineage>
</organism>
<protein>
    <recommendedName>
        <fullName evidence="1">Protein RecA</fullName>
    </recommendedName>
    <alternativeName>
        <fullName evidence="1">Recombinase A</fullName>
    </alternativeName>
</protein>
<gene>
    <name evidence="1" type="primary">recA</name>
    <name type="ordered locus">SACE_1736</name>
</gene>
<evidence type="ECO:0000255" key="1">
    <source>
        <dbReference type="HAMAP-Rule" id="MF_00268"/>
    </source>
</evidence>